<accession>Q7FNR8</accession>
<reference key="1">
    <citation type="journal article" date="2002" name="Mol. Biol. Evol.">
        <title>The plastid chromosome of Atropa belladonna and its comparison with that of Nicotiana tabacum: the role of RNA editing in generating divergence in the process of plant speciation.</title>
        <authorList>
            <person name="Schmitz-Linneweber C."/>
            <person name="Regel R."/>
            <person name="Du T.G."/>
            <person name="Hupfer H."/>
            <person name="Herrmann R.G."/>
            <person name="Maier R.M."/>
        </authorList>
    </citation>
    <scope>NUCLEOTIDE SEQUENCE [LARGE SCALE GENOMIC DNA]</scope>
    <source>
        <strain>cv. Ab5p(kan)</strain>
    </source>
</reference>
<keyword id="KW-0150">Chloroplast</keyword>
<keyword id="KW-0472">Membrane</keyword>
<keyword id="KW-0520">NAD</keyword>
<keyword id="KW-0521">NADP</keyword>
<keyword id="KW-0934">Plastid</keyword>
<keyword id="KW-0618">Plastoquinone</keyword>
<keyword id="KW-0874">Quinone</keyword>
<keyword id="KW-0793">Thylakoid</keyword>
<keyword id="KW-1278">Translocase</keyword>
<keyword id="KW-0812">Transmembrane</keyword>
<keyword id="KW-1133">Transmembrane helix</keyword>
<keyword id="KW-0813">Transport</keyword>
<organism>
    <name type="scientific">Atropa belladonna</name>
    <name type="common">Belladonna</name>
    <name type="synonym">Deadly nightshade</name>
    <dbReference type="NCBI Taxonomy" id="33113"/>
    <lineage>
        <taxon>Eukaryota</taxon>
        <taxon>Viridiplantae</taxon>
        <taxon>Streptophyta</taxon>
        <taxon>Embryophyta</taxon>
        <taxon>Tracheophyta</taxon>
        <taxon>Spermatophyta</taxon>
        <taxon>Magnoliopsida</taxon>
        <taxon>eudicotyledons</taxon>
        <taxon>Gunneridae</taxon>
        <taxon>Pentapetalae</taxon>
        <taxon>asterids</taxon>
        <taxon>lamiids</taxon>
        <taxon>Solanales</taxon>
        <taxon>Solanaceae</taxon>
        <taxon>Solanoideae</taxon>
        <taxon>Hyoscyameae</taxon>
        <taxon>Atropa</taxon>
    </lineage>
</organism>
<dbReference type="EC" id="7.1.1.-" evidence="1"/>
<dbReference type="EMBL" id="AJ316582">
    <property type="protein sequence ID" value="CAC88098.1"/>
    <property type="molecule type" value="Genomic_DNA"/>
</dbReference>
<dbReference type="RefSeq" id="NP_783284.1">
    <property type="nucleotide sequence ID" value="NC_004561.1"/>
</dbReference>
<dbReference type="SMR" id="Q7FNR8"/>
<dbReference type="GeneID" id="806439"/>
<dbReference type="GO" id="GO:0009535">
    <property type="term" value="C:chloroplast thylakoid membrane"/>
    <property type="evidence" value="ECO:0007669"/>
    <property type="project" value="UniProtKB-SubCell"/>
</dbReference>
<dbReference type="GO" id="GO:0030964">
    <property type="term" value="C:NADH dehydrogenase complex"/>
    <property type="evidence" value="ECO:0007669"/>
    <property type="project" value="TreeGrafter"/>
</dbReference>
<dbReference type="GO" id="GO:0016655">
    <property type="term" value="F:oxidoreductase activity, acting on NAD(P)H, quinone or similar compound as acceptor"/>
    <property type="evidence" value="ECO:0007669"/>
    <property type="project" value="UniProtKB-UniRule"/>
</dbReference>
<dbReference type="GO" id="GO:0048038">
    <property type="term" value="F:quinone binding"/>
    <property type="evidence" value="ECO:0007669"/>
    <property type="project" value="UniProtKB-KW"/>
</dbReference>
<dbReference type="GO" id="GO:0042773">
    <property type="term" value="P:ATP synthesis coupled electron transport"/>
    <property type="evidence" value="ECO:0007669"/>
    <property type="project" value="InterPro"/>
</dbReference>
<dbReference type="GO" id="GO:0019684">
    <property type="term" value="P:photosynthesis, light reaction"/>
    <property type="evidence" value="ECO:0007669"/>
    <property type="project" value="UniProtKB-UniRule"/>
</dbReference>
<dbReference type="FunFam" id="1.10.287.3510:FF:000001">
    <property type="entry name" value="NADH-quinone oxidoreductase subunit K"/>
    <property type="match status" value="1"/>
</dbReference>
<dbReference type="Gene3D" id="1.10.287.3510">
    <property type="match status" value="1"/>
</dbReference>
<dbReference type="HAMAP" id="MF_01456">
    <property type="entry name" value="NDH1_NuoK"/>
    <property type="match status" value="1"/>
</dbReference>
<dbReference type="InterPro" id="IPR001133">
    <property type="entry name" value="NADH_UbQ_OxRdtase_chain4L/K"/>
</dbReference>
<dbReference type="InterPro" id="IPR039428">
    <property type="entry name" value="NUOK/Mnh_C1-like"/>
</dbReference>
<dbReference type="NCBIfam" id="NF004320">
    <property type="entry name" value="PRK05715.1-2"/>
    <property type="match status" value="1"/>
</dbReference>
<dbReference type="NCBIfam" id="NF004322">
    <property type="entry name" value="PRK05715.1-4"/>
    <property type="match status" value="1"/>
</dbReference>
<dbReference type="NCBIfam" id="NF004323">
    <property type="entry name" value="PRK05715.1-5"/>
    <property type="match status" value="1"/>
</dbReference>
<dbReference type="PANTHER" id="PTHR11434:SF16">
    <property type="entry name" value="NADH-UBIQUINONE OXIDOREDUCTASE CHAIN 4L"/>
    <property type="match status" value="1"/>
</dbReference>
<dbReference type="PANTHER" id="PTHR11434">
    <property type="entry name" value="NADH-UBIQUINONE OXIDOREDUCTASE SUBUNIT ND4L"/>
    <property type="match status" value="1"/>
</dbReference>
<dbReference type="Pfam" id="PF00420">
    <property type="entry name" value="Oxidored_q2"/>
    <property type="match status" value="1"/>
</dbReference>
<proteinExistence type="inferred from homology"/>
<evidence type="ECO:0000255" key="1">
    <source>
        <dbReference type="HAMAP-Rule" id="MF_01456"/>
    </source>
</evidence>
<name>NU4LC_ATRBE</name>
<feature type="chain" id="PRO_0000360306" description="NAD(P)H-quinone oxidoreductase subunit 4L, chloroplastic">
    <location>
        <begin position="1"/>
        <end position="101"/>
    </location>
</feature>
<feature type="transmembrane region" description="Helical" evidence="1">
    <location>
        <begin position="2"/>
        <end position="22"/>
    </location>
</feature>
<feature type="transmembrane region" description="Helical" evidence="1">
    <location>
        <begin position="32"/>
        <end position="52"/>
    </location>
</feature>
<feature type="transmembrane region" description="Helical" evidence="1">
    <location>
        <begin position="61"/>
        <end position="81"/>
    </location>
</feature>
<protein>
    <recommendedName>
        <fullName evidence="1">NAD(P)H-quinone oxidoreductase subunit 4L, chloroplastic</fullName>
        <ecNumber evidence="1">7.1.1.-</ecNumber>
    </recommendedName>
    <alternativeName>
        <fullName evidence="1">NAD(P)H dehydrogenase subunit 4L</fullName>
    </alternativeName>
    <alternativeName>
        <fullName evidence="1">NADH-plastoquinone oxidoreductase subunit 4L</fullName>
    </alternativeName>
</protein>
<geneLocation type="chloroplast"/>
<gene>
    <name evidence="1" type="primary">ndhE</name>
</gene>
<sequence>MILEHVLVLSAYLFSIGIYGLITSRNMVRALMCLELILNAVNINFVTFSDFFDNRQLKGDIFSIFVIAIAAAEAAIGLAIVSSIYRNRKSTRINQSNLLNN</sequence>
<comment type="function">
    <text evidence="1">NDH shuttles electrons from NAD(P)H:plastoquinone, via FMN and iron-sulfur (Fe-S) centers, to quinones in the photosynthetic chain and possibly in a chloroplast respiratory chain. The immediate electron acceptor for the enzyme in this species is believed to be plastoquinone. Couples the redox reaction to proton translocation, and thus conserves the redox energy in a proton gradient.</text>
</comment>
<comment type="catalytic activity">
    <reaction evidence="1">
        <text>a plastoquinone + NADH + (n+1) H(+)(in) = a plastoquinol + NAD(+) + n H(+)(out)</text>
        <dbReference type="Rhea" id="RHEA:42608"/>
        <dbReference type="Rhea" id="RHEA-COMP:9561"/>
        <dbReference type="Rhea" id="RHEA-COMP:9562"/>
        <dbReference type="ChEBI" id="CHEBI:15378"/>
        <dbReference type="ChEBI" id="CHEBI:17757"/>
        <dbReference type="ChEBI" id="CHEBI:57540"/>
        <dbReference type="ChEBI" id="CHEBI:57945"/>
        <dbReference type="ChEBI" id="CHEBI:62192"/>
    </reaction>
</comment>
<comment type="catalytic activity">
    <reaction evidence="1">
        <text>a plastoquinone + NADPH + (n+1) H(+)(in) = a plastoquinol + NADP(+) + n H(+)(out)</text>
        <dbReference type="Rhea" id="RHEA:42612"/>
        <dbReference type="Rhea" id="RHEA-COMP:9561"/>
        <dbReference type="Rhea" id="RHEA-COMP:9562"/>
        <dbReference type="ChEBI" id="CHEBI:15378"/>
        <dbReference type="ChEBI" id="CHEBI:17757"/>
        <dbReference type="ChEBI" id="CHEBI:57783"/>
        <dbReference type="ChEBI" id="CHEBI:58349"/>
        <dbReference type="ChEBI" id="CHEBI:62192"/>
    </reaction>
</comment>
<comment type="subunit">
    <text evidence="1">NDH is composed of at least 16 different subunits, 5 of which are encoded in the nucleus.</text>
</comment>
<comment type="subcellular location">
    <subcellularLocation>
        <location evidence="1">Plastid</location>
        <location evidence="1">Chloroplast thylakoid membrane</location>
        <topology evidence="1">Multi-pass membrane protein</topology>
    </subcellularLocation>
</comment>
<comment type="similarity">
    <text evidence="1">Belongs to the complex I subunit 4L family.</text>
</comment>